<reference key="1">
    <citation type="journal article" date="2000" name="Nature">
        <title>The genome sequence of the food-borne pathogen Campylobacter jejuni reveals hypervariable sequences.</title>
        <authorList>
            <person name="Parkhill J."/>
            <person name="Wren B.W."/>
            <person name="Mungall K.L."/>
            <person name="Ketley J.M."/>
            <person name="Churcher C.M."/>
            <person name="Basham D."/>
            <person name="Chillingworth T."/>
            <person name="Davies R.M."/>
            <person name="Feltwell T."/>
            <person name="Holroyd S."/>
            <person name="Jagels K."/>
            <person name="Karlyshev A.V."/>
            <person name="Moule S."/>
            <person name="Pallen M.J."/>
            <person name="Penn C.W."/>
            <person name="Quail M.A."/>
            <person name="Rajandream M.A."/>
            <person name="Rutherford K.M."/>
            <person name="van Vliet A.H.M."/>
            <person name="Whitehead S."/>
            <person name="Barrell B.G."/>
        </authorList>
    </citation>
    <scope>NUCLEOTIDE SEQUENCE [LARGE SCALE GENOMIC DNA]</scope>
    <source>
        <strain>ATCC 700819 / NCTC 11168</strain>
    </source>
</reference>
<organism>
    <name type="scientific">Campylobacter jejuni subsp. jejuni serotype O:2 (strain ATCC 700819 / NCTC 11168)</name>
    <dbReference type="NCBI Taxonomy" id="192222"/>
    <lineage>
        <taxon>Bacteria</taxon>
        <taxon>Pseudomonadati</taxon>
        <taxon>Campylobacterota</taxon>
        <taxon>Epsilonproteobacteria</taxon>
        <taxon>Campylobacterales</taxon>
        <taxon>Campylobacteraceae</taxon>
        <taxon>Campylobacter</taxon>
    </lineage>
</organism>
<name>Y846_CAMJE</name>
<accession>Q9PP77</accession>
<accession>Q0PA44</accession>
<evidence type="ECO:0000250" key="1"/>
<evidence type="ECO:0000305" key="2"/>
<dbReference type="EC" id="3.1.-.-"/>
<dbReference type="EMBL" id="AL111168">
    <property type="protein sequence ID" value="CAL34974.1"/>
    <property type="molecule type" value="Genomic_DNA"/>
</dbReference>
<dbReference type="PIR" id="F81357">
    <property type="entry name" value="F81357"/>
</dbReference>
<dbReference type="RefSeq" id="WP_002871823.1">
    <property type="nucleotide sequence ID" value="NZ_SZUC01000001.1"/>
</dbReference>
<dbReference type="RefSeq" id="YP_002344253.1">
    <property type="nucleotide sequence ID" value="NC_002163.1"/>
</dbReference>
<dbReference type="SMR" id="Q9PP77"/>
<dbReference type="IntAct" id="Q9PP77">
    <property type="interactions" value="4"/>
</dbReference>
<dbReference type="STRING" id="192222.Cj0846"/>
<dbReference type="PaxDb" id="192222-Cj0846"/>
<dbReference type="DNASU" id="905145"/>
<dbReference type="EnsemblBacteria" id="CAL34974">
    <property type="protein sequence ID" value="CAL34974"/>
    <property type="gene ID" value="Cj0846"/>
</dbReference>
<dbReference type="GeneID" id="905145"/>
<dbReference type="KEGG" id="cje:Cj0846"/>
<dbReference type="PATRIC" id="fig|192222.6.peg.834"/>
<dbReference type="eggNOG" id="COG1408">
    <property type="taxonomic scope" value="Bacteria"/>
</dbReference>
<dbReference type="HOGENOM" id="CLU_025443_0_1_7"/>
<dbReference type="OrthoDB" id="9780884at2"/>
<dbReference type="Proteomes" id="UP000000799">
    <property type="component" value="Chromosome"/>
</dbReference>
<dbReference type="GO" id="GO:0016020">
    <property type="term" value="C:membrane"/>
    <property type="evidence" value="ECO:0007669"/>
    <property type="project" value="GOC"/>
</dbReference>
<dbReference type="GO" id="GO:0046872">
    <property type="term" value="F:metal ion binding"/>
    <property type="evidence" value="ECO:0007669"/>
    <property type="project" value="UniProtKB-KW"/>
</dbReference>
<dbReference type="GO" id="GO:0008758">
    <property type="term" value="F:UDP-2,3-diacylglucosamine hydrolase activity"/>
    <property type="evidence" value="ECO:0007669"/>
    <property type="project" value="TreeGrafter"/>
</dbReference>
<dbReference type="GO" id="GO:0009245">
    <property type="term" value="P:lipid A biosynthetic process"/>
    <property type="evidence" value="ECO:0007669"/>
    <property type="project" value="TreeGrafter"/>
</dbReference>
<dbReference type="CDD" id="cd07385">
    <property type="entry name" value="MPP_YkuE_C"/>
    <property type="match status" value="1"/>
</dbReference>
<dbReference type="Gene3D" id="3.60.21.10">
    <property type="match status" value="1"/>
</dbReference>
<dbReference type="InterPro" id="IPR004843">
    <property type="entry name" value="Calcineurin-like_PHP_ApaH"/>
</dbReference>
<dbReference type="InterPro" id="IPR029052">
    <property type="entry name" value="Metallo-depent_PP-like"/>
</dbReference>
<dbReference type="InterPro" id="IPR051158">
    <property type="entry name" value="Metallophosphoesterase_sf"/>
</dbReference>
<dbReference type="PANTHER" id="PTHR31302:SF31">
    <property type="entry name" value="PHOSPHODIESTERASE YAEI"/>
    <property type="match status" value="1"/>
</dbReference>
<dbReference type="PANTHER" id="PTHR31302">
    <property type="entry name" value="TRANSMEMBRANE PROTEIN WITH METALLOPHOSPHOESTERASE DOMAIN-RELATED"/>
    <property type="match status" value="1"/>
</dbReference>
<dbReference type="Pfam" id="PF00149">
    <property type="entry name" value="Metallophos"/>
    <property type="match status" value="1"/>
</dbReference>
<dbReference type="SUPFAM" id="SSF56300">
    <property type="entry name" value="Metallo-dependent phosphatases"/>
    <property type="match status" value="1"/>
</dbReference>
<gene>
    <name type="ordered locus">Cj0846</name>
</gene>
<proteinExistence type="inferred from homology"/>
<feature type="chain" id="PRO_0000172853" description="Uncharacterized metallophosphoesterase Cj0846">
    <location>
        <begin position="1"/>
        <end position="374"/>
    </location>
</feature>
<feature type="binding site" evidence="1">
    <location>
        <position position="158"/>
    </location>
    <ligand>
        <name>a divalent metal cation</name>
        <dbReference type="ChEBI" id="CHEBI:60240"/>
        <label>1</label>
    </ligand>
</feature>
<feature type="binding site" evidence="1">
    <location>
        <position position="160"/>
    </location>
    <ligand>
        <name>a divalent metal cation</name>
        <dbReference type="ChEBI" id="CHEBI:60240"/>
        <label>1</label>
    </ligand>
</feature>
<feature type="binding site" evidence="1">
    <location>
        <position position="190"/>
    </location>
    <ligand>
        <name>a divalent metal cation</name>
        <dbReference type="ChEBI" id="CHEBI:60240"/>
        <label>1</label>
    </ligand>
</feature>
<feature type="binding site" evidence="1">
    <location>
        <position position="190"/>
    </location>
    <ligand>
        <name>a divalent metal cation</name>
        <dbReference type="ChEBI" id="CHEBI:60240"/>
        <label>2</label>
    </ligand>
</feature>
<feature type="binding site" evidence="1">
    <location>
        <position position="221"/>
    </location>
    <ligand>
        <name>a divalent metal cation</name>
        <dbReference type="ChEBI" id="CHEBI:60240"/>
        <label>2</label>
    </ligand>
</feature>
<feature type="binding site" evidence="1">
    <location>
        <position position="312"/>
    </location>
    <ligand>
        <name>a divalent metal cation</name>
        <dbReference type="ChEBI" id="CHEBI:60240"/>
        <label>2</label>
    </ligand>
</feature>
<feature type="binding site" evidence="1">
    <location>
        <position position="314"/>
    </location>
    <ligand>
        <name>a divalent metal cation</name>
        <dbReference type="ChEBI" id="CHEBI:60240"/>
        <label>1</label>
    </ligand>
</feature>
<comment type="cofactor">
    <cofactor evidence="1">
        <name>a divalent metal cation</name>
        <dbReference type="ChEBI" id="CHEBI:60240"/>
    </cofactor>
    <text evidence="1">Binds 2 divalent metal cations.</text>
</comment>
<comment type="similarity">
    <text evidence="2">Belongs to the metallophosphoesterase superfamily.</text>
</comment>
<keyword id="KW-0378">Hydrolase</keyword>
<keyword id="KW-0479">Metal-binding</keyword>
<keyword id="KW-1185">Reference proteome</keyword>
<protein>
    <recommendedName>
        <fullName>Uncharacterized metallophosphoesterase Cj0846</fullName>
        <ecNumber>3.1.-.-</ecNumber>
    </recommendedName>
</protein>
<sequence>MIFLIFSFIVLLIFGLANVYIYKRLIKKITLFKYFYKIFSFIFIVLFLAQAVFLIFRRDEYLSDTWYEILAMFYAPTYCLFFMTLAWDFVKLILALMGKRDKTYNLILRLIFELSLIVLSVFLIYASINNALKTPEVKSVDVEIPNLKKDLKIVMLTDIHLGKNLHENFLDKLITKVNLQSPDMVVIVGDLIDTNPKDLKNYISKLNDFNSTYGTFYALGNHEYYHGINEVLDLLRKHTNMKILVNQNLDLGFIDIAGLGDLAGLDRGLYAPDLARIKVDLNTSKASILLTHQPKTALLYDLSDFDLVLSGHTHGGQIFPFMFLVKLQQGFVHGLYDLGEKTKLYVSSGAGFWGPSLRVFAPSEIVILNLKGKK</sequence>